<proteinExistence type="inferred from homology"/>
<feature type="chain" id="PRO_0000292855" description="Bifunctional enzyme IspD/IspF">
    <location>
        <begin position="1"/>
        <end position="408"/>
    </location>
</feature>
<feature type="region of interest" description="2-C-methyl-D-erythritol 4-phosphate cytidylyltransferase" evidence="1">
    <location>
        <begin position="1"/>
        <end position="247"/>
    </location>
</feature>
<feature type="region of interest" description="2-C-methyl-D-erythritol 2,4-cyclodiphosphate synthase" evidence="1">
    <location>
        <begin position="248"/>
        <end position="408"/>
    </location>
</feature>
<feature type="binding site" evidence="1">
    <location>
        <begin position="254"/>
        <end position="256"/>
    </location>
    <ligand>
        <name>4-CDP-2-C-methyl-D-erythritol 2-phosphate</name>
        <dbReference type="ChEBI" id="CHEBI:57919"/>
    </ligand>
</feature>
<feature type="binding site" evidence="1">
    <location>
        <position position="254"/>
    </location>
    <ligand>
        <name>a divalent metal cation</name>
        <dbReference type="ChEBI" id="CHEBI:60240"/>
    </ligand>
</feature>
<feature type="binding site" evidence="1">
    <location>
        <position position="256"/>
    </location>
    <ligand>
        <name>a divalent metal cation</name>
        <dbReference type="ChEBI" id="CHEBI:60240"/>
    </ligand>
</feature>
<feature type="binding site" evidence="1">
    <location>
        <begin position="280"/>
        <end position="281"/>
    </location>
    <ligand>
        <name>4-CDP-2-C-methyl-D-erythritol 2-phosphate</name>
        <dbReference type="ChEBI" id="CHEBI:57919"/>
    </ligand>
</feature>
<feature type="binding site" evidence="1">
    <location>
        <position position="288"/>
    </location>
    <ligand>
        <name>a divalent metal cation</name>
        <dbReference type="ChEBI" id="CHEBI:60240"/>
    </ligand>
</feature>
<feature type="binding site" evidence="1">
    <location>
        <begin position="302"/>
        <end position="304"/>
    </location>
    <ligand>
        <name>4-CDP-2-C-methyl-D-erythritol 2-phosphate</name>
        <dbReference type="ChEBI" id="CHEBI:57919"/>
    </ligand>
</feature>
<feature type="binding site" evidence="1">
    <location>
        <begin position="378"/>
        <end position="381"/>
    </location>
    <ligand>
        <name>4-CDP-2-C-methyl-D-erythritol 2-phosphate</name>
        <dbReference type="ChEBI" id="CHEBI:57919"/>
    </ligand>
</feature>
<feature type="binding site" evidence="1">
    <location>
        <position position="385"/>
    </location>
    <ligand>
        <name>4-CDP-2-C-methyl-D-erythritol 2-phosphate</name>
        <dbReference type="ChEBI" id="CHEBI:57919"/>
    </ligand>
</feature>
<feature type="binding site" evidence="1">
    <location>
        <position position="388"/>
    </location>
    <ligand>
        <name>4-CDP-2-C-methyl-D-erythritol 2-phosphate</name>
        <dbReference type="ChEBI" id="CHEBI:57919"/>
    </ligand>
</feature>
<feature type="site" description="Transition state stabilizer" evidence="1">
    <location>
        <position position="26"/>
    </location>
</feature>
<feature type="site" description="Transition state stabilizer" evidence="1">
    <location>
        <position position="35"/>
    </location>
</feature>
<feature type="site" description="Positions MEP for the nucleophilic attack" evidence="1">
    <location>
        <position position="166"/>
    </location>
</feature>
<feature type="site" description="Positions MEP for the nucleophilic attack" evidence="1">
    <location>
        <position position="223"/>
    </location>
</feature>
<feature type="site" description="Transition state stabilizer" evidence="1">
    <location>
        <position position="280"/>
    </location>
</feature>
<feature type="site" description="Transition state stabilizer" evidence="1">
    <location>
        <position position="379"/>
    </location>
</feature>
<gene>
    <name evidence="1" type="primary">ispDF</name>
    <name type="ordered locus">Meso_1621</name>
</gene>
<dbReference type="EC" id="2.7.7.60" evidence="1"/>
<dbReference type="EC" id="4.6.1.12" evidence="1"/>
<dbReference type="EMBL" id="CP000390">
    <property type="protein sequence ID" value="ABG63016.1"/>
    <property type="molecule type" value="Genomic_DNA"/>
</dbReference>
<dbReference type="SMR" id="Q11HV9"/>
<dbReference type="STRING" id="266779.Meso_1621"/>
<dbReference type="KEGG" id="mes:Meso_1621"/>
<dbReference type="eggNOG" id="COG0245">
    <property type="taxonomic scope" value="Bacteria"/>
</dbReference>
<dbReference type="eggNOG" id="COG1211">
    <property type="taxonomic scope" value="Bacteria"/>
</dbReference>
<dbReference type="HOGENOM" id="CLU_042800_2_5_5"/>
<dbReference type="OrthoDB" id="9804336at2"/>
<dbReference type="UniPathway" id="UPA00056">
    <property type="reaction ID" value="UER00093"/>
</dbReference>
<dbReference type="UniPathway" id="UPA00056">
    <property type="reaction ID" value="UER00095"/>
</dbReference>
<dbReference type="GO" id="GO:0008685">
    <property type="term" value="F:2-C-methyl-D-erythritol 2,4-cyclodiphosphate synthase activity"/>
    <property type="evidence" value="ECO:0007669"/>
    <property type="project" value="UniProtKB-UniRule"/>
</dbReference>
<dbReference type="GO" id="GO:0050518">
    <property type="term" value="F:2-C-methyl-D-erythritol 4-phosphate cytidylyltransferase activity"/>
    <property type="evidence" value="ECO:0007669"/>
    <property type="project" value="UniProtKB-UniRule"/>
</dbReference>
<dbReference type="GO" id="GO:0046872">
    <property type="term" value="F:metal ion binding"/>
    <property type="evidence" value="ECO:0007669"/>
    <property type="project" value="UniProtKB-KW"/>
</dbReference>
<dbReference type="GO" id="GO:0019288">
    <property type="term" value="P:isopentenyl diphosphate biosynthetic process, methylerythritol 4-phosphate pathway"/>
    <property type="evidence" value="ECO:0007669"/>
    <property type="project" value="UniProtKB-UniRule"/>
</dbReference>
<dbReference type="GO" id="GO:0016114">
    <property type="term" value="P:terpenoid biosynthetic process"/>
    <property type="evidence" value="ECO:0007669"/>
    <property type="project" value="InterPro"/>
</dbReference>
<dbReference type="CDD" id="cd02516">
    <property type="entry name" value="CDP-ME_synthetase"/>
    <property type="match status" value="1"/>
</dbReference>
<dbReference type="CDD" id="cd00554">
    <property type="entry name" value="MECDP_synthase"/>
    <property type="match status" value="1"/>
</dbReference>
<dbReference type="FunFam" id="3.90.550.10:FF:000003">
    <property type="entry name" value="2-C-methyl-D-erythritol 4-phosphate cytidylyltransferase"/>
    <property type="match status" value="1"/>
</dbReference>
<dbReference type="Gene3D" id="3.30.1330.50">
    <property type="entry name" value="2-C-methyl-D-erythritol 2,4-cyclodiphosphate synthase"/>
    <property type="match status" value="1"/>
</dbReference>
<dbReference type="Gene3D" id="3.90.550.10">
    <property type="entry name" value="Spore Coat Polysaccharide Biosynthesis Protein SpsA, Chain A"/>
    <property type="match status" value="1"/>
</dbReference>
<dbReference type="HAMAP" id="MF_00108">
    <property type="entry name" value="IspD"/>
    <property type="match status" value="1"/>
</dbReference>
<dbReference type="HAMAP" id="MF_01520">
    <property type="entry name" value="IspDF"/>
    <property type="match status" value="1"/>
</dbReference>
<dbReference type="HAMAP" id="MF_00107">
    <property type="entry name" value="IspF"/>
    <property type="match status" value="1"/>
</dbReference>
<dbReference type="InterPro" id="IPR001228">
    <property type="entry name" value="IspD"/>
</dbReference>
<dbReference type="InterPro" id="IPR026596">
    <property type="entry name" value="IspD/F"/>
</dbReference>
<dbReference type="InterPro" id="IPR034683">
    <property type="entry name" value="IspD/TarI"/>
</dbReference>
<dbReference type="InterPro" id="IPR018294">
    <property type="entry name" value="ISPD_synthase_CS"/>
</dbReference>
<dbReference type="InterPro" id="IPR003526">
    <property type="entry name" value="MECDP_synthase"/>
</dbReference>
<dbReference type="InterPro" id="IPR020555">
    <property type="entry name" value="MECDP_synthase_CS"/>
</dbReference>
<dbReference type="InterPro" id="IPR036571">
    <property type="entry name" value="MECDP_synthase_sf"/>
</dbReference>
<dbReference type="InterPro" id="IPR029044">
    <property type="entry name" value="Nucleotide-diphossugar_trans"/>
</dbReference>
<dbReference type="NCBIfam" id="TIGR00453">
    <property type="entry name" value="ispD"/>
    <property type="match status" value="1"/>
</dbReference>
<dbReference type="NCBIfam" id="TIGR00151">
    <property type="entry name" value="ispF"/>
    <property type="match status" value="1"/>
</dbReference>
<dbReference type="NCBIfam" id="NF006899">
    <property type="entry name" value="PRK09382.1"/>
    <property type="match status" value="1"/>
</dbReference>
<dbReference type="PANTHER" id="PTHR43181">
    <property type="entry name" value="2-C-METHYL-D-ERYTHRITOL 2,4-CYCLODIPHOSPHATE SYNTHASE, CHLOROPLASTIC"/>
    <property type="match status" value="1"/>
</dbReference>
<dbReference type="PANTHER" id="PTHR43181:SF1">
    <property type="entry name" value="2-C-METHYL-D-ERYTHRITOL 2,4-CYCLODIPHOSPHATE SYNTHASE, CHLOROPLASTIC"/>
    <property type="match status" value="1"/>
</dbReference>
<dbReference type="Pfam" id="PF01128">
    <property type="entry name" value="IspD"/>
    <property type="match status" value="1"/>
</dbReference>
<dbReference type="Pfam" id="PF02542">
    <property type="entry name" value="YgbB"/>
    <property type="match status" value="1"/>
</dbReference>
<dbReference type="SUPFAM" id="SSF69765">
    <property type="entry name" value="IpsF-like"/>
    <property type="match status" value="1"/>
</dbReference>
<dbReference type="SUPFAM" id="SSF53448">
    <property type="entry name" value="Nucleotide-diphospho-sugar transferases"/>
    <property type="match status" value="1"/>
</dbReference>
<dbReference type="PROSITE" id="PS01295">
    <property type="entry name" value="ISPD"/>
    <property type="match status" value="1"/>
</dbReference>
<dbReference type="PROSITE" id="PS01350">
    <property type="entry name" value="ISPF"/>
    <property type="match status" value="1"/>
</dbReference>
<reference key="1">
    <citation type="submission" date="2006-06" db="EMBL/GenBank/DDBJ databases">
        <title>Complete sequence of chromosome of Mesorhizobium sp. BNC1.</title>
        <authorList>
            <consortium name="US DOE Joint Genome Institute"/>
            <person name="Copeland A."/>
            <person name="Lucas S."/>
            <person name="Lapidus A."/>
            <person name="Barry K."/>
            <person name="Detter J.C."/>
            <person name="Glavina del Rio T."/>
            <person name="Hammon N."/>
            <person name="Israni S."/>
            <person name="Dalin E."/>
            <person name="Tice H."/>
            <person name="Pitluck S."/>
            <person name="Chertkov O."/>
            <person name="Brettin T."/>
            <person name="Bruce D."/>
            <person name="Han C."/>
            <person name="Tapia R."/>
            <person name="Gilna P."/>
            <person name="Schmutz J."/>
            <person name="Larimer F."/>
            <person name="Land M."/>
            <person name="Hauser L."/>
            <person name="Kyrpides N."/>
            <person name="Mikhailova N."/>
            <person name="Richardson P."/>
        </authorList>
    </citation>
    <scope>NUCLEOTIDE SEQUENCE [LARGE SCALE GENOMIC DNA]</scope>
    <source>
        <strain>BNC1</strain>
    </source>
</reference>
<protein>
    <recommendedName>
        <fullName evidence="1">Bifunctional enzyme IspD/IspF</fullName>
    </recommendedName>
    <domain>
        <recommendedName>
            <fullName evidence="1">2-C-methyl-D-erythritol 4-phosphate cytidylyltransferase</fullName>
            <ecNumber evidence="1">2.7.7.60</ecNumber>
        </recommendedName>
        <alternativeName>
            <fullName evidence="1">4-diphosphocytidyl-2C-methyl-D-erythritol synthase</fullName>
        </alternativeName>
        <alternativeName>
            <fullName evidence="1">MEP cytidylyltransferase</fullName>
            <shortName evidence="1">MCT</shortName>
        </alternativeName>
    </domain>
    <domain>
        <recommendedName>
            <fullName evidence="1">2-C-methyl-D-erythritol 2,4-cyclodiphosphate synthase</fullName>
            <shortName evidence="1">MECDP-synthase</shortName>
            <shortName evidence="1">MECPP-synthase</shortName>
            <shortName evidence="1">MECPS</shortName>
            <ecNumber evidence="1">4.6.1.12</ecNumber>
        </recommendedName>
    </domain>
</protein>
<accession>Q11HV9</accession>
<organism>
    <name type="scientific">Chelativorans sp. (strain BNC1)</name>
    <dbReference type="NCBI Taxonomy" id="266779"/>
    <lineage>
        <taxon>Bacteria</taxon>
        <taxon>Pseudomonadati</taxon>
        <taxon>Pseudomonadota</taxon>
        <taxon>Alphaproteobacteria</taxon>
        <taxon>Hyphomicrobiales</taxon>
        <taxon>Phyllobacteriaceae</taxon>
        <taxon>Chelativorans</taxon>
    </lineage>
</organism>
<comment type="function">
    <text evidence="1">Bifunctional enzyme that catalyzes the formation of 4-diphosphocytidyl-2-C-methyl-D-erythritol from CTP and 2-C-methyl-D-erythritol 4-phosphate (MEP) (IspD), and catalyzes the conversion of 4-diphosphocytidyl-2-C-methyl-D-erythritol 2-phosphate (CDP-ME2P) to 2-C-methyl-D-erythritol 2,4-cyclodiphosphate (ME-CPP) with a corresponding release of cytidine 5-monophosphate (CMP) (IspF).</text>
</comment>
<comment type="catalytic activity">
    <reaction evidence="1">
        <text>2-C-methyl-D-erythritol 4-phosphate + CTP + H(+) = 4-CDP-2-C-methyl-D-erythritol + diphosphate</text>
        <dbReference type="Rhea" id="RHEA:13429"/>
        <dbReference type="ChEBI" id="CHEBI:15378"/>
        <dbReference type="ChEBI" id="CHEBI:33019"/>
        <dbReference type="ChEBI" id="CHEBI:37563"/>
        <dbReference type="ChEBI" id="CHEBI:57823"/>
        <dbReference type="ChEBI" id="CHEBI:58262"/>
        <dbReference type="EC" id="2.7.7.60"/>
    </reaction>
</comment>
<comment type="catalytic activity">
    <reaction evidence="1">
        <text>4-CDP-2-C-methyl-D-erythritol 2-phosphate = 2-C-methyl-D-erythritol 2,4-cyclic diphosphate + CMP</text>
        <dbReference type="Rhea" id="RHEA:23864"/>
        <dbReference type="ChEBI" id="CHEBI:57919"/>
        <dbReference type="ChEBI" id="CHEBI:58483"/>
        <dbReference type="ChEBI" id="CHEBI:60377"/>
        <dbReference type="EC" id="4.6.1.12"/>
    </reaction>
</comment>
<comment type="cofactor">
    <cofactor evidence="1">
        <name>a divalent metal cation</name>
        <dbReference type="ChEBI" id="CHEBI:60240"/>
    </cofactor>
</comment>
<comment type="pathway">
    <text evidence="1">Isoprenoid biosynthesis; isopentenyl diphosphate biosynthesis via DXP pathway; isopentenyl diphosphate from 1-deoxy-D-xylulose 5-phosphate: step 2/6.</text>
</comment>
<comment type="pathway">
    <text evidence="1">Isoprenoid biosynthesis; isopentenyl diphosphate biosynthesis via DXP pathway; isopentenyl diphosphate from 1-deoxy-D-xylulose 5-phosphate: step 4/6.</text>
</comment>
<comment type="similarity">
    <text evidence="1">In the N-terminal section; belongs to the IspD/TarI cytidylyltransferase family. IspD subfamily.</text>
</comment>
<comment type="similarity">
    <text evidence="1">In the C-terminal section; belongs to the IspF family.</text>
</comment>
<name>ISPDF_CHESB</name>
<evidence type="ECO:0000255" key="1">
    <source>
        <dbReference type="HAMAP-Rule" id="MF_01520"/>
    </source>
</evidence>
<keyword id="KW-0414">Isoprene biosynthesis</keyword>
<keyword id="KW-0456">Lyase</keyword>
<keyword id="KW-0479">Metal-binding</keyword>
<keyword id="KW-0511">Multifunctional enzyme</keyword>
<keyword id="KW-0548">Nucleotidyltransferase</keyword>
<keyword id="KW-0808">Transferase</keyword>
<sequence>MNAPFEKDRRNRRVAVVVVAAGRGERAGQAQNGPKQYRLIGGKPVIRHTLEVLAKSKRVGTIAVAVHPEDSSLFNQAREGLDGDIRAVHGGASRQESTRLALAALEEVKPDIVLIHDGVRPFIDEALIERVIEAVGEDSGALPALPVSDTLKRSGVNGIITGTVPRDGLFAAQTPQGFPFRPIYEAHQKAWQSGRSDFTDDAAIAEWAGISVRLVSGSPDNVKLTWAKDIALADQRLGPAMTELPDIRVGNGYDVHGFGPGGHVTLCGVQIPHGKTLMGHSDADVGLHALTDALLATCGAGDIGTHFPPSDPQWKGAKSRIFVEHAVNLLRARGGRIANADVTLICEAPRIGPYREAMLAELSDMLQISPERVSVKATTNEGLGFIGRAEGIAAIATATVAYPGSLGN</sequence>